<accession>O24312</accession>
<feature type="chain" id="PRO_0000052252" description="Trans-cinnamate 4-monooxygenase">
    <location>
        <begin position="1"/>
        <end position="505"/>
    </location>
</feature>
<feature type="transmembrane region" description="Helical" evidence="3">
    <location>
        <begin position="3"/>
        <end position="23"/>
    </location>
</feature>
<feature type="binding site" evidence="2">
    <location>
        <begin position="213"/>
        <end position="218"/>
    </location>
    <ligand>
        <name>(E)-cinnamate</name>
        <dbReference type="ChEBI" id="CHEBI:15669"/>
    </ligand>
</feature>
<feature type="binding site" evidence="2">
    <location>
        <position position="306"/>
    </location>
    <ligand>
        <name>(E)-cinnamate</name>
        <dbReference type="ChEBI" id="CHEBI:15669"/>
    </ligand>
</feature>
<feature type="binding site" description="axial binding residue" evidence="2">
    <location>
        <position position="447"/>
    </location>
    <ligand>
        <name>heme</name>
        <dbReference type="ChEBI" id="CHEBI:30413"/>
    </ligand>
    <ligandPart>
        <name>Fe</name>
        <dbReference type="ChEBI" id="CHEBI:18248"/>
    </ligandPart>
</feature>
<gene>
    <name type="primary">CYP73A13</name>
</gene>
<keyword id="KW-0349">Heme</keyword>
<keyword id="KW-0408">Iron</keyword>
<keyword id="KW-0472">Membrane</keyword>
<keyword id="KW-0479">Metal-binding</keyword>
<keyword id="KW-0503">Monooxygenase</keyword>
<keyword id="KW-0560">Oxidoreductase</keyword>
<keyword id="KW-0812">Transmembrane</keyword>
<keyword id="KW-1133">Transmembrane helix</keyword>
<protein>
    <recommendedName>
        <fullName>Trans-cinnamate 4-monooxygenase</fullName>
        <ecNumber evidence="1">1.14.14.91</ecNumber>
    </recommendedName>
    <alternativeName>
        <fullName>Cinnamic acid 4-hydroxylase</fullName>
        <shortName>C4H</shortName>
        <shortName>CA4H</shortName>
    </alternativeName>
    <alternativeName>
        <fullName>Cytochrome P450 73</fullName>
    </alternativeName>
    <alternativeName>
        <fullName>Cytochrome P450C4H</fullName>
    </alternativeName>
</protein>
<reference key="1">
    <citation type="online journal article" date="1996" name="Plant Gene Register">
        <title>A full-length cDNA encoding trans-cinnamate 4-hydroxylase from developing xylem of Populus tremuloides.</title>
        <authorList>
            <person name="Ge L."/>
            <person name="Chiang V.L."/>
        </authorList>
        <locator>PGR96-075</locator>
    </citation>
    <scope>NUCLEOTIDE SEQUENCE [MRNA]</scope>
</reference>
<sequence>MDLLLLEKTLLGSFVAILVAILVSKLRGKRFKLPPGPLPVPVFGNWLQVGDDLNHRNLTDLAKKFGDILLLRMGQRNLVVVSSPELSKEVLHTQGVEFGSRTRNVVFDIFTGKGQDMVFTVYGEHWRKMRRIMTVPFFTNKVVQQYRYGWEEEAAQVVEDVKKNPGAATHGIVLRRRLQLMMYNNMYRIMFDRRFESEEDPLFNKLKALNGERSRLAQSFDYNYGDFIPILRPFLRGYLKICQEVKERRLQLFKDYFVDERKKLASTKNMCNEGLKCAIDHILDAQKKGEINEDNVLYIVENINVAAIETTLWSIEWGIAELVNHPEIQKKLRHELDTLLGPGHQITEPDTYKLPYLNAVVKETLRLRMAIPLLVPHMNLHDAKLGGFDIPAESKILVNAWWLANNPAHWKNPEEFRPERFLEEEAKVEANGNDFRYLPFGVGRRSCPGIILALPILGITLGRLVQNFELLPPPGQSKIDTSEKGGQFSLHILKHSTIVAKPRSF</sequence>
<comment type="function">
    <text evidence="1">Catalyzes the first oxidative step of the phenylpropanoid pathway in higher plants by transforming trans-cinnamate into p-coumarate (By similarity). The compounds formed by this pathway are essential components for lignification, pollination, and defense against ultraviolet light, predators and pathogens (By similarity).</text>
</comment>
<comment type="catalytic activity">
    <reaction evidence="1">
        <text>(E)-cinnamate + reduced [NADPH--hemoprotein reductase] + O2 = (E)-4-coumarate + oxidized [NADPH--hemoprotein reductase] + H2O + H(+)</text>
        <dbReference type="Rhea" id="RHEA:10608"/>
        <dbReference type="Rhea" id="RHEA-COMP:11964"/>
        <dbReference type="Rhea" id="RHEA-COMP:11965"/>
        <dbReference type="ChEBI" id="CHEBI:12876"/>
        <dbReference type="ChEBI" id="CHEBI:15377"/>
        <dbReference type="ChEBI" id="CHEBI:15378"/>
        <dbReference type="ChEBI" id="CHEBI:15379"/>
        <dbReference type="ChEBI" id="CHEBI:15669"/>
        <dbReference type="ChEBI" id="CHEBI:57618"/>
        <dbReference type="ChEBI" id="CHEBI:58210"/>
        <dbReference type="EC" id="1.14.14.91"/>
    </reaction>
</comment>
<comment type="cofactor">
    <cofactor evidence="2">
        <name>heme</name>
        <dbReference type="ChEBI" id="CHEBI:30413"/>
    </cofactor>
</comment>
<comment type="pathway">
    <text evidence="4">Phenylpropanoid metabolism; trans-4-coumarate biosynthesis; trans-4-coumarate from trans-cinnamate: step 1/1.</text>
</comment>
<comment type="subcellular location">
    <subcellularLocation>
        <location evidence="3">Membrane</location>
        <topology evidence="3">Single-pass membrane protein</topology>
    </subcellularLocation>
</comment>
<comment type="similarity">
    <text evidence="4">Belongs to the cytochrome P450 family.</text>
</comment>
<dbReference type="EC" id="1.14.14.91" evidence="1"/>
<dbReference type="EMBL" id="U47293">
    <property type="protein sequence ID" value="AAB67874.1"/>
    <property type="molecule type" value="mRNA"/>
</dbReference>
<dbReference type="SMR" id="O24312"/>
<dbReference type="UniPathway" id="UPA00825">
    <property type="reaction ID" value="UER00789"/>
</dbReference>
<dbReference type="GO" id="GO:0016020">
    <property type="term" value="C:membrane"/>
    <property type="evidence" value="ECO:0007669"/>
    <property type="project" value="UniProtKB-SubCell"/>
</dbReference>
<dbReference type="GO" id="GO:0020037">
    <property type="term" value="F:heme binding"/>
    <property type="evidence" value="ECO:0007669"/>
    <property type="project" value="InterPro"/>
</dbReference>
<dbReference type="GO" id="GO:0005506">
    <property type="term" value="F:iron ion binding"/>
    <property type="evidence" value="ECO:0007669"/>
    <property type="project" value="InterPro"/>
</dbReference>
<dbReference type="GO" id="GO:0016710">
    <property type="term" value="F:trans-cinnamate 4-monooxygenase activity"/>
    <property type="evidence" value="ECO:0007669"/>
    <property type="project" value="UniProtKB-EC"/>
</dbReference>
<dbReference type="GO" id="GO:0009808">
    <property type="term" value="P:lignin metabolic process"/>
    <property type="evidence" value="ECO:0007669"/>
    <property type="project" value="TreeGrafter"/>
</dbReference>
<dbReference type="CDD" id="cd11074">
    <property type="entry name" value="CYP73"/>
    <property type="match status" value="1"/>
</dbReference>
<dbReference type="FunFam" id="1.10.630.10:FF:000013">
    <property type="entry name" value="Trans-cinnamate 4-monooxygenase"/>
    <property type="match status" value="1"/>
</dbReference>
<dbReference type="Gene3D" id="1.10.630.10">
    <property type="entry name" value="Cytochrome P450"/>
    <property type="match status" value="1"/>
</dbReference>
<dbReference type="InterPro" id="IPR001128">
    <property type="entry name" value="Cyt_P450"/>
</dbReference>
<dbReference type="InterPro" id="IPR017972">
    <property type="entry name" value="Cyt_P450_CS"/>
</dbReference>
<dbReference type="InterPro" id="IPR002401">
    <property type="entry name" value="Cyt_P450_E_grp-I"/>
</dbReference>
<dbReference type="InterPro" id="IPR036396">
    <property type="entry name" value="Cyt_P450_sf"/>
</dbReference>
<dbReference type="PANTHER" id="PTHR47948">
    <property type="entry name" value="TRANS-CINNAMATE 4-MONOOXYGENASE"/>
    <property type="match status" value="1"/>
</dbReference>
<dbReference type="PANTHER" id="PTHR47948:SF11">
    <property type="entry name" value="TRANS-CINNAMATE 4-MONOOXYGENASE"/>
    <property type="match status" value="1"/>
</dbReference>
<dbReference type="Pfam" id="PF00067">
    <property type="entry name" value="p450"/>
    <property type="match status" value="1"/>
</dbReference>
<dbReference type="PRINTS" id="PR00463">
    <property type="entry name" value="EP450I"/>
</dbReference>
<dbReference type="PRINTS" id="PR00385">
    <property type="entry name" value="P450"/>
</dbReference>
<dbReference type="SUPFAM" id="SSF48264">
    <property type="entry name" value="Cytochrome P450"/>
    <property type="match status" value="1"/>
</dbReference>
<dbReference type="PROSITE" id="PS00086">
    <property type="entry name" value="CYTOCHROME_P450"/>
    <property type="match status" value="1"/>
</dbReference>
<proteinExistence type="evidence at transcript level"/>
<evidence type="ECO:0000250" key="1">
    <source>
        <dbReference type="UniProtKB" id="Q04468"/>
    </source>
</evidence>
<evidence type="ECO:0000250" key="2">
    <source>
        <dbReference type="UniProtKB" id="Q94IP1"/>
    </source>
</evidence>
<evidence type="ECO:0000255" key="3"/>
<evidence type="ECO:0000305" key="4"/>
<organism>
    <name type="scientific">Populus tremuloides</name>
    <name type="common">Quaking aspen</name>
    <dbReference type="NCBI Taxonomy" id="3693"/>
    <lineage>
        <taxon>Eukaryota</taxon>
        <taxon>Viridiplantae</taxon>
        <taxon>Streptophyta</taxon>
        <taxon>Embryophyta</taxon>
        <taxon>Tracheophyta</taxon>
        <taxon>Spermatophyta</taxon>
        <taxon>Magnoliopsida</taxon>
        <taxon>eudicotyledons</taxon>
        <taxon>Gunneridae</taxon>
        <taxon>Pentapetalae</taxon>
        <taxon>rosids</taxon>
        <taxon>fabids</taxon>
        <taxon>Malpighiales</taxon>
        <taxon>Salicaceae</taxon>
        <taxon>Saliceae</taxon>
        <taxon>Populus</taxon>
    </lineage>
</organism>
<name>TCMO_POPTM</name>